<protein>
    <recommendedName>
        <fullName evidence="4">Efflux pump ustT</fullName>
    </recommendedName>
    <alternativeName>
        <fullName evidence="4">Ustiloxin B biosynthesis protein T</fullName>
    </alternativeName>
</protein>
<dbReference type="EMBL" id="EQ963480">
    <property type="protein sequence ID" value="EED49426.1"/>
    <property type="molecule type" value="Genomic_DNA"/>
</dbReference>
<dbReference type="RefSeq" id="XP_002381327.1">
    <property type="nucleotide sequence ID" value="XM_002381286.1"/>
</dbReference>
<dbReference type="SMR" id="B8NM75"/>
<dbReference type="STRING" id="332952.B8NM75"/>
<dbReference type="EnsemblFungi" id="EED49426">
    <property type="protein sequence ID" value="EED49426"/>
    <property type="gene ID" value="AFLA_095070"/>
</dbReference>
<dbReference type="VEuPathDB" id="FungiDB:AFLA_009745"/>
<dbReference type="eggNOG" id="ENOG502SI7X">
    <property type="taxonomic scope" value="Eukaryota"/>
</dbReference>
<dbReference type="HOGENOM" id="CLU_013756_2_1_1"/>
<dbReference type="OMA" id="HEIAKDK"/>
<dbReference type="GO" id="GO:0005886">
    <property type="term" value="C:plasma membrane"/>
    <property type="evidence" value="ECO:0007669"/>
    <property type="project" value="UniProtKB-SubCell"/>
</dbReference>
<dbReference type="GO" id="GO:0022857">
    <property type="term" value="F:transmembrane transporter activity"/>
    <property type="evidence" value="ECO:0007669"/>
    <property type="project" value="InterPro"/>
</dbReference>
<dbReference type="Gene3D" id="1.20.1250.20">
    <property type="entry name" value="MFS general substrate transporter like domains"/>
    <property type="match status" value="1"/>
</dbReference>
<dbReference type="InterPro" id="IPR011701">
    <property type="entry name" value="MFS"/>
</dbReference>
<dbReference type="InterPro" id="IPR036259">
    <property type="entry name" value="MFS_trans_sf"/>
</dbReference>
<dbReference type="PANTHER" id="PTHR23507:SF1">
    <property type="entry name" value="FI18259P1-RELATED"/>
    <property type="match status" value="1"/>
</dbReference>
<dbReference type="PANTHER" id="PTHR23507">
    <property type="entry name" value="ZGC:174356"/>
    <property type="match status" value="1"/>
</dbReference>
<dbReference type="Pfam" id="PF07690">
    <property type="entry name" value="MFS_1"/>
    <property type="match status" value="1"/>
</dbReference>
<dbReference type="SUPFAM" id="SSF103473">
    <property type="entry name" value="MFS general substrate transporter"/>
    <property type="match status" value="1"/>
</dbReference>
<dbReference type="PROSITE" id="PS00216">
    <property type="entry name" value="SUGAR_TRANSPORT_1"/>
    <property type="match status" value="1"/>
</dbReference>
<evidence type="ECO:0000255" key="1"/>
<evidence type="ECO:0000269" key="2">
    <source>
    </source>
</evidence>
<evidence type="ECO:0000269" key="3">
    <source>
    </source>
</evidence>
<evidence type="ECO:0000303" key="4">
    <source>
    </source>
</evidence>
<evidence type="ECO:0000305" key="5"/>
<evidence type="ECO:0000305" key="6">
    <source>
    </source>
</evidence>
<accession>B8NM75</accession>
<name>USTT_ASPFN</name>
<feature type="chain" id="PRO_0000437303" description="Efflux pump ustT">
    <location>
        <begin position="1"/>
        <end position="507"/>
    </location>
</feature>
<feature type="transmembrane region" description="Helical" evidence="1">
    <location>
        <begin position="59"/>
        <end position="79"/>
    </location>
</feature>
<feature type="transmembrane region" description="Helical" evidence="1">
    <location>
        <begin position="146"/>
        <end position="166"/>
    </location>
</feature>
<feature type="transmembrane region" description="Helical" evidence="1">
    <location>
        <begin position="180"/>
        <end position="200"/>
    </location>
</feature>
<feature type="transmembrane region" description="Helical" evidence="1">
    <location>
        <begin position="216"/>
        <end position="236"/>
    </location>
</feature>
<feature type="transmembrane region" description="Helical" evidence="1">
    <location>
        <begin position="240"/>
        <end position="260"/>
    </location>
</feature>
<feature type="transmembrane region" description="Helical" evidence="1">
    <location>
        <begin position="316"/>
        <end position="336"/>
    </location>
</feature>
<feature type="transmembrane region" description="Helical" evidence="1">
    <location>
        <begin position="359"/>
        <end position="379"/>
    </location>
</feature>
<feature type="transmembrane region" description="Helical" evidence="1">
    <location>
        <begin position="398"/>
        <end position="418"/>
    </location>
</feature>
<feature type="transmembrane region" description="Helical" evidence="1">
    <location>
        <begin position="421"/>
        <end position="441"/>
    </location>
</feature>
<feature type="transmembrane region" description="Helical" evidence="1">
    <location>
        <begin position="449"/>
        <end position="469"/>
    </location>
</feature>
<feature type="transmembrane region" description="Helical" evidence="1">
    <location>
        <begin position="481"/>
        <end position="501"/>
    </location>
</feature>
<keyword id="KW-1003">Cell membrane</keyword>
<keyword id="KW-0472">Membrane</keyword>
<keyword id="KW-0812">Transmembrane</keyword>
<keyword id="KW-1133">Transmembrane helix</keyword>
<keyword id="KW-0813">Transport</keyword>
<gene>
    <name evidence="4" type="primary">ustT</name>
    <name type="ORF">AFLA_095070</name>
</gene>
<sequence length="507" mass="55085">MSGTSPPTPKDHITMVDHDYSDCSEDVSLIGADREHRRSSTPDGLYQHKINRHYNPLYIAVVASLTFLITDIAGQIIVAPRLAIFEHIICKAYYTQVSGAAGTGMGDCKVEPVQSELALINGWREMFDNIPGTSYTLDRFGRKKVLLIAMVGCLLSDIWVGVVTWFPDTFPLRAVWFSGIWQLIGGGGASISSMAFAMIADSCPADLRTTAFSQVHAAVLVAELVSVPAGAALANFNPWIPVFGAAIFMVLGILFAYVVVPDVRPAGSKREGGSDGDFLSSAQESHPTWLMSIHHRWRKIVDEFRKDSSWIRDVNVLLIMASFFVCQLGRMISGITLQYAAAKFHWKFDKASLLVSLRAGVNLFVLAAIIPALSYILVKRFKLNDVVKDKRITQINGVCLIIGSFVMFLAASPGTLVFGQTVFALGFAFSVTARSFLTGMVDPMHIGTVFTGVTTMLYGGLVIGSPMLAKTLQWGLQLGGIWVGLPFLLAAVLFTLALGAISAARSY</sequence>
<comment type="function">
    <text evidence="2">Efflux pump; part of the gene cluster that mediates the biosynthesis of the secondary metabolite ustiloxin B, an antimitotic tetrapeptide (PubMed:24841822, PubMed:26703898, PubMed:27166860). Probably involved in self-resistance through the export of ustiloxin B (PubMed:24841822).</text>
</comment>
<comment type="pathway">
    <text evidence="2">Mycotoxin biosynthesis.</text>
</comment>
<comment type="subcellular location">
    <subcellularLocation>
        <location evidence="6">Cell membrane</location>
        <topology evidence="1">Multi-pass membrane protein</topology>
    </subcellularLocation>
</comment>
<comment type="disruption phenotype">
    <text evidence="2 3">Decreases the production of ustiloxin B (PubMed:24841822, PubMed:26703898).</text>
</comment>
<comment type="similarity">
    <text evidence="5">Belongs to the major facilitator superfamily.</text>
</comment>
<reference key="1">
    <citation type="journal article" date="2015" name="Genome Announc.">
        <title>Genome sequence of Aspergillus flavus NRRL 3357, a strain that causes aflatoxin contamination of food and feed.</title>
        <authorList>
            <person name="Nierman W.C."/>
            <person name="Yu J."/>
            <person name="Fedorova-Abrams N.D."/>
            <person name="Losada L."/>
            <person name="Cleveland T.E."/>
            <person name="Bhatnagar D."/>
            <person name="Bennett J.W."/>
            <person name="Dean R."/>
            <person name="Payne G.A."/>
        </authorList>
    </citation>
    <scope>NUCLEOTIDE SEQUENCE [LARGE SCALE GENOMIC DNA]</scope>
    <source>
        <strain>ATCC 200026 / FGSC A1120 / IAM 13836 / NRRL 3357 / JCM 12722 / SRRC 167</strain>
    </source>
</reference>
<reference key="2">
    <citation type="journal article" date="2014" name="Fungal Genet. Biol.">
        <title>Characterization of the biosynthetic gene cluster for the ribosomally synthesized cyclic peptide ustiloxin B in Aspergillus flavus.</title>
        <authorList>
            <person name="Umemura M."/>
            <person name="Nagano N."/>
            <person name="Koike H."/>
            <person name="Kawano J."/>
            <person name="Ishii T."/>
            <person name="Miyamura Y."/>
            <person name="Kikuchi M."/>
            <person name="Tamano K."/>
            <person name="Yu J."/>
            <person name="Shin-ya K."/>
            <person name="Machida M."/>
        </authorList>
    </citation>
    <scope>FUNCTION</scope>
    <scope>DISRUPTION PHENOTYPE</scope>
</reference>
<reference key="3">
    <citation type="journal article" date="2016" name="Angew. Chem. Int. Ed.">
        <title>Unveiling the biosynthetic pathway of the ribosomally synthesized and post-translationally modified peptide ustiloxin B in filamentous fungi.</title>
        <authorList>
            <person name="Ye Y."/>
            <person name="Minami A."/>
            <person name="Igarashi Y."/>
            <person name="Izumikawa M."/>
            <person name="Umemura M."/>
            <person name="Nagano N."/>
            <person name="Machida M."/>
            <person name="Kawahara T."/>
            <person name="Shin-Ya K."/>
            <person name="Gomi K."/>
            <person name="Oikawa H."/>
        </authorList>
    </citation>
    <scope>FUNCTION</scope>
</reference>
<reference key="4">
    <citation type="journal article" date="2016" name="Fungal Genet. Biol.">
        <title>Class of cyclic ribosomal peptide synthetic genes in filamentous fungi.</title>
        <authorList>
            <person name="Nagano N."/>
            <person name="Umemura M."/>
            <person name="Izumikawa M."/>
            <person name="Kawano J."/>
            <person name="Ishii T."/>
            <person name="Kikuchi M."/>
            <person name="Tomii K."/>
            <person name="Kumagai T."/>
            <person name="Yoshimi A."/>
            <person name="Machida M."/>
            <person name="Abe K."/>
            <person name="Shin-ya K."/>
            <person name="Asai K."/>
        </authorList>
    </citation>
    <scope>FUNCTION</scope>
    <scope>DISRUPTION PHENOTYPE</scope>
</reference>
<proteinExistence type="inferred from homology"/>
<organism>
    <name type="scientific">Aspergillus flavus (strain ATCC 200026 / FGSC A1120 / IAM 13836 / NRRL 3357 / JCM 12722 / SRRC 167)</name>
    <dbReference type="NCBI Taxonomy" id="332952"/>
    <lineage>
        <taxon>Eukaryota</taxon>
        <taxon>Fungi</taxon>
        <taxon>Dikarya</taxon>
        <taxon>Ascomycota</taxon>
        <taxon>Pezizomycotina</taxon>
        <taxon>Eurotiomycetes</taxon>
        <taxon>Eurotiomycetidae</taxon>
        <taxon>Eurotiales</taxon>
        <taxon>Aspergillaceae</taxon>
        <taxon>Aspergillus</taxon>
        <taxon>Aspergillus subgen. Circumdati</taxon>
    </lineage>
</organism>